<organism>
    <name type="scientific">Acidiphilium cryptum (strain JF-5)</name>
    <dbReference type="NCBI Taxonomy" id="349163"/>
    <lineage>
        <taxon>Bacteria</taxon>
        <taxon>Pseudomonadati</taxon>
        <taxon>Pseudomonadota</taxon>
        <taxon>Alphaproteobacteria</taxon>
        <taxon>Acetobacterales</taxon>
        <taxon>Acidocellaceae</taxon>
        <taxon>Acidiphilium</taxon>
    </lineage>
</organism>
<reference key="1">
    <citation type="submission" date="2007-05" db="EMBL/GenBank/DDBJ databases">
        <title>Complete sequence of chromosome of Acidiphilium cryptum JF-5.</title>
        <authorList>
            <consortium name="US DOE Joint Genome Institute"/>
            <person name="Copeland A."/>
            <person name="Lucas S."/>
            <person name="Lapidus A."/>
            <person name="Barry K."/>
            <person name="Detter J.C."/>
            <person name="Glavina del Rio T."/>
            <person name="Hammon N."/>
            <person name="Israni S."/>
            <person name="Dalin E."/>
            <person name="Tice H."/>
            <person name="Pitluck S."/>
            <person name="Sims D."/>
            <person name="Brettin T."/>
            <person name="Bruce D."/>
            <person name="Han C."/>
            <person name="Schmutz J."/>
            <person name="Larimer F."/>
            <person name="Land M."/>
            <person name="Hauser L."/>
            <person name="Kyrpides N."/>
            <person name="Kim E."/>
            <person name="Magnuson T."/>
            <person name="Richardson P."/>
        </authorList>
    </citation>
    <scope>NUCLEOTIDE SEQUENCE [LARGE SCALE GENOMIC DNA]</scope>
    <source>
        <strain>JF-5</strain>
    </source>
</reference>
<comment type="function">
    <text evidence="1">One of two assembly initiator proteins, it binds directly to the 5'-end of the 23S rRNA, where it nucleates assembly of the 50S subunit.</text>
</comment>
<comment type="function">
    <text evidence="1">One of the proteins that surrounds the polypeptide exit tunnel on the outside of the subunit.</text>
</comment>
<comment type="subunit">
    <text evidence="1">Part of the 50S ribosomal subunit.</text>
</comment>
<comment type="similarity">
    <text evidence="1">Belongs to the universal ribosomal protein uL24 family.</text>
</comment>
<keyword id="KW-1185">Reference proteome</keyword>
<keyword id="KW-0687">Ribonucleoprotein</keyword>
<keyword id="KW-0689">Ribosomal protein</keyword>
<keyword id="KW-0694">RNA-binding</keyword>
<keyword id="KW-0699">rRNA-binding</keyword>
<dbReference type="EMBL" id="CP000697">
    <property type="protein sequence ID" value="ABQ31136.1"/>
    <property type="molecule type" value="Genomic_DNA"/>
</dbReference>
<dbReference type="RefSeq" id="WP_012039719.1">
    <property type="nucleotide sequence ID" value="NC_009484.1"/>
</dbReference>
<dbReference type="SMR" id="A5FZV4"/>
<dbReference type="STRING" id="349163.Acry_1935"/>
<dbReference type="KEGG" id="acr:Acry_1935"/>
<dbReference type="eggNOG" id="COG0198">
    <property type="taxonomic scope" value="Bacteria"/>
</dbReference>
<dbReference type="HOGENOM" id="CLU_093315_2_0_5"/>
<dbReference type="Proteomes" id="UP000000245">
    <property type="component" value="Chromosome"/>
</dbReference>
<dbReference type="GO" id="GO:1990904">
    <property type="term" value="C:ribonucleoprotein complex"/>
    <property type="evidence" value="ECO:0007669"/>
    <property type="project" value="UniProtKB-KW"/>
</dbReference>
<dbReference type="GO" id="GO:0005840">
    <property type="term" value="C:ribosome"/>
    <property type="evidence" value="ECO:0007669"/>
    <property type="project" value="UniProtKB-KW"/>
</dbReference>
<dbReference type="GO" id="GO:0019843">
    <property type="term" value="F:rRNA binding"/>
    <property type="evidence" value="ECO:0007669"/>
    <property type="project" value="UniProtKB-UniRule"/>
</dbReference>
<dbReference type="GO" id="GO:0003735">
    <property type="term" value="F:structural constituent of ribosome"/>
    <property type="evidence" value="ECO:0007669"/>
    <property type="project" value="InterPro"/>
</dbReference>
<dbReference type="GO" id="GO:0006412">
    <property type="term" value="P:translation"/>
    <property type="evidence" value="ECO:0007669"/>
    <property type="project" value="UniProtKB-UniRule"/>
</dbReference>
<dbReference type="CDD" id="cd06089">
    <property type="entry name" value="KOW_RPL26"/>
    <property type="match status" value="1"/>
</dbReference>
<dbReference type="FunFam" id="2.30.30.30:FF:000004">
    <property type="entry name" value="50S ribosomal protein L24"/>
    <property type="match status" value="1"/>
</dbReference>
<dbReference type="Gene3D" id="2.30.30.30">
    <property type="match status" value="1"/>
</dbReference>
<dbReference type="HAMAP" id="MF_01326_B">
    <property type="entry name" value="Ribosomal_uL24_B"/>
    <property type="match status" value="1"/>
</dbReference>
<dbReference type="InterPro" id="IPR005824">
    <property type="entry name" value="KOW"/>
</dbReference>
<dbReference type="InterPro" id="IPR014722">
    <property type="entry name" value="Rib_uL2_dom2"/>
</dbReference>
<dbReference type="InterPro" id="IPR003256">
    <property type="entry name" value="Ribosomal_uL24"/>
</dbReference>
<dbReference type="InterPro" id="IPR005825">
    <property type="entry name" value="Ribosomal_uL24_CS"/>
</dbReference>
<dbReference type="InterPro" id="IPR041988">
    <property type="entry name" value="Ribosomal_uL24_KOW"/>
</dbReference>
<dbReference type="InterPro" id="IPR008991">
    <property type="entry name" value="Translation_prot_SH3-like_sf"/>
</dbReference>
<dbReference type="NCBIfam" id="TIGR01079">
    <property type="entry name" value="rplX_bact"/>
    <property type="match status" value="1"/>
</dbReference>
<dbReference type="PANTHER" id="PTHR12903">
    <property type="entry name" value="MITOCHONDRIAL RIBOSOMAL PROTEIN L24"/>
    <property type="match status" value="1"/>
</dbReference>
<dbReference type="Pfam" id="PF00467">
    <property type="entry name" value="KOW"/>
    <property type="match status" value="1"/>
</dbReference>
<dbReference type="Pfam" id="PF17136">
    <property type="entry name" value="ribosomal_L24"/>
    <property type="match status" value="1"/>
</dbReference>
<dbReference type="SMART" id="SM00739">
    <property type="entry name" value="KOW"/>
    <property type="match status" value="1"/>
</dbReference>
<dbReference type="SUPFAM" id="SSF50104">
    <property type="entry name" value="Translation proteins SH3-like domain"/>
    <property type="match status" value="1"/>
</dbReference>
<dbReference type="PROSITE" id="PS01108">
    <property type="entry name" value="RIBOSOMAL_L24"/>
    <property type="match status" value="1"/>
</dbReference>
<feature type="chain" id="PRO_1000067574" description="Large ribosomal subunit protein uL24">
    <location>
        <begin position="1"/>
        <end position="106"/>
    </location>
</feature>
<protein>
    <recommendedName>
        <fullName evidence="1">Large ribosomal subunit protein uL24</fullName>
    </recommendedName>
    <alternativeName>
        <fullName evidence="2">50S ribosomal protein L24</fullName>
    </alternativeName>
</protein>
<name>RL24_ACICJ</name>
<accession>A5FZV4</accession>
<gene>
    <name evidence="1" type="primary">rplX</name>
    <name type="ordered locus">Acry_1935</name>
</gene>
<proteinExistence type="inferred from homology"/>
<sequence>MAARIRKGDRVVVIAGASKGREGEVLRVLPAENKAVVSGVAVAKRHTKARGMGEQGGIIQKEMPVHLSNIALIDPETKKPTRVGFRVLEDGRKVRVARKSDSVIDG</sequence>
<evidence type="ECO:0000255" key="1">
    <source>
        <dbReference type="HAMAP-Rule" id="MF_01326"/>
    </source>
</evidence>
<evidence type="ECO:0000305" key="2"/>